<organism>
    <name type="scientific">Shewanella baltica (strain OS195)</name>
    <dbReference type="NCBI Taxonomy" id="399599"/>
    <lineage>
        <taxon>Bacteria</taxon>
        <taxon>Pseudomonadati</taxon>
        <taxon>Pseudomonadota</taxon>
        <taxon>Gammaproteobacteria</taxon>
        <taxon>Alteromonadales</taxon>
        <taxon>Shewanellaceae</taxon>
        <taxon>Shewanella</taxon>
    </lineage>
</organism>
<accession>A9L4U8</accession>
<proteinExistence type="inferred from homology"/>
<keyword id="KW-0064">Aspartyl protease</keyword>
<keyword id="KW-0997">Cell inner membrane</keyword>
<keyword id="KW-1003">Cell membrane</keyword>
<keyword id="KW-0378">Hydrolase</keyword>
<keyword id="KW-0472">Membrane</keyword>
<keyword id="KW-0645">Protease</keyword>
<keyword id="KW-0812">Transmembrane</keyword>
<keyword id="KW-1133">Transmembrane helix</keyword>
<reference key="1">
    <citation type="submission" date="2007-11" db="EMBL/GenBank/DDBJ databases">
        <title>Complete sequence of chromosome of Shewanella baltica OS195.</title>
        <authorList>
            <consortium name="US DOE Joint Genome Institute"/>
            <person name="Copeland A."/>
            <person name="Lucas S."/>
            <person name="Lapidus A."/>
            <person name="Barry K."/>
            <person name="Glavina del Rio T."/>
            <person name="Dalin E."/>
            <person name="Tice H."/>
            <person name="Pitluck S."/>
            <person name="Chain P."/>
            <person name="Malfatti S."/>
            <person name="Shin M."/>
            <person name="Vergez L."/>
            <person name="Schmutz J."/>
            <person name="Larimer F."/>
            <person name="Land M."/>
            <person name="Hauser L."/>
            <person name="Kyrpides N."/>
            <person name="Kim E."/>
            <person name="Brettar I."/>
            <person name="Rodrigues J."/>
            <person name="Konstantinidis K."/>
            <person name="Klappenbach J."/>
            <person name="Hofle M."/>
            <person name="Tiedje J."/>
            <person name="Richardson P."/>
        </authorList>
    </citation>
    <scope>NUCLEOTIDE SEQUENCE [LARGE SCALE GENOMIC DNA]</scope>
    <source>
        <strain>OS195</strain>
    </source>
</reference>
<evidence type="ECO:0000255" key="1">
    <source>
        <dbReference type="HAMAP-Rule" id="MF_00161"/>
    </source>
</evidence>
<sequence length="171" mass="19330">MPLTWKDSGLRWYWVAVLVFFADQLSKQWVLANFDLHESLNLLPFFNFTYVRNYGAAFSFLSDAGGWQRWLFTIVAVGFSTLLTVWLRKQSASLLKLNLAYTLVIGGALGNLVDRLMHGFVVDFIDFFWAKSHYPAFNIADSAICIGAVLIIWDAFLSGKSETDSAEGVKK</sequence>
<name>LSPA_SHEB9</name>
<dbReference type="EC" id="3.4.23.36" evidence="1"/>
<dbReference type="EMBL" id="CP000891">
    <property type="protein sequence ID" value="ABX48333.1"/>
    <property type="molecule type" value="Genomic_DNA"/>
</dbReference>
<dbReference type="RefSeq" id="WP_006080637.1">
    <property type="nucleotide sequence ID" value="NC_009997.1"/>
</dbReference>
<dbReference type="SMR" id="A9L4U8"/>
<dbReference type="MEROPS" id="A08.001"/>
<dbReference type="GeneID" id="11771437"/>
<dbReference type="KEGG" id="sbn:Sbal195_1157"/>
<dbReference type="HOGENOM" id="CLU_083252_4_0_6"/>
<dbReference type="UniPathway" id="UPA00665"/>
<dbReference type="Proteomes" id="UP000000770">
    <property type="component" value="Chromosome"/>
</dbReference>
<dbReference type="GO" id="GO:0005886">
    <property type="term" value="C:plasma membrane"/>
    <property type="evidence" value="ECO:0007669"/>
    <property type="project" value="UniProtKB-SubCell"/>
</dbReference>
<dbReference type="GO" id="GO:0004190">
    <property type="term" value="F:aspartic-type endopeptidase activity"/>
    <property type="evidence" value="ECO:0007669"/>
    <property type="project" value="UniProtKB-UniRule"/>
</dbReference>
<dbReference type="GO" id="GO:0006508">
    <property type="term" value="P:proteolysis"/>
    <property type="evidence" value="ECO:0007669"/>
    <property type="project" value="UniProtKB-KW"/>
</dbReference>
<dbReference type="HAMAP" id="MF_00161">
    <property type="entry name" value="LspA"/>
    <property type="match status" value="1"/>
</dbReference>
<dbReference type="InterPro" id="IPR001872">
    <property type="entry name" value="Peptidase_A8"/>
</dbReference>
<dbReference type="NCBIfam" id="TIGR00077">
    <property type="entry name" value="lspA"/>
    <property type="match status" value="1"/>
</dbReference>
<dbReference type="PANTHER" id="PTHR33695">
    <property type="entry name" value="LIPOPROTEIN SIGNAL PEPTIDASE"/>
    <property type="match status" value="1"/>
</dbReference>
<dbReference type="PANTHER" id="PTHR33695:SF1">
    <property type="entry name" value="LIPOPROTEIN SIGNAL PEPTIDASE"/>
    <property type="match status" value="1"/>
</dbReference>
<dbReference type="Pfam" id="PF01252">
    <property type="entry name" value="Peptidase_A8"/>
    <property type="match status" value="1"/>
</dbReference>
<dbReference type="PRINTS" id="PR00781">
    <property type="entry name" value="LIPOSIGPTASE"/>
</dbReference>
<dbReference type="PROSITE" id="PS00855">
    <property type="entry name" value="SPASE_II"/>
    <property type="match status" value="1"/>
</dbReference>
<comment type="function">
    <text evidence="1">This protein specifically catalyzes the removal of signal peptides from prolipoproteins.</text>
</comment>
<comment type="catalytic activity">
    <reaction evidence="1">
        <text>Release of signal peptides from bacterial membrane prolipoproteins. Hydrolyzes -Xaa-Yaa-Zaa-|-(S,diacylglyceryl)Cys-, in which Xaa is hydrophobic (preferably Leu), and Yaa (Ala or Ser) and Zaa (Gly or Ala) have small, neutral side chains.</text>
        <dbReference type="EC" id="3.4.23.36"/>
    </reaction>
</comment>
<comment type="pathway">
    <text evidence="1">Protein modification; lipoprotein biosynthesis (signal peptide cleavage).</text>
</comment>
<comment type="subcellular location">
    <subcellularLocation>
        <location evidence="1">Cell inner membrane</location>
        <topology evidence="1">Multi-pass membrane protein</topology>
    </subcellularLocation>
</comment>
<comment type="similarity">
    <text evidence="1">Belongs to the peptidase A8 family.</text>
</comment>
<gene>
    <name evidence="1" type="primary">lspA</name>
    <name type="ordered locus">Sbal195_1157</name>
</gene>
<protein>
    <recommendedName>
        <fullName evidence="1">Lipoprotein signal peptidase</fullName>
        <ecNumber evidence="1">3.4.23.36</ecNumber>
    </recommendedName>
    <alternativeName>
        <fullName evidence="1">Prolipoprotein signal peptidase</fullName>
    </alternativeName>
    <alternativeName>
        <fullName evidence="1">Signal peptidase II</fullName>
        <shortName evidence="1">SPase II</shortName>
    </alternativeName>
</protein>
<feature type="chain" id="PRO_1000076930" description="Lipoprotein signal peptidase">
    <location>
        <begin position="1"/>
        <end position="171"/>
    </location>
</feature>
<feature type="transmembrane region" description="Helical" evidence="1">
    <location>
        <begin position="12"/>
        <end position="32"/>
    </location>
</feature>
<feature type="transmembrane region" description="Helical" evidence="1">
    <location>
        <begin position="67"/>
        <end position="87"/>
    </location>
</feature>
<feature type="transmembrane region" description="Helical" evidence="1">
    <location>
        <begin position="93"/>
        <end position="113"/>
    </location>
</feature>
<feature type="transmembrane region" description="Helical" evidence="1">
    <location>
        <begin position="137"/>
        <end position="157"/>
    </location>
</feature>
<feature type="active site" evidence="1">
    <location>
        <position position="123"/>
    </location>
</feature>
<feature type="active site" evidence="1">
    <location>
        <position position="141"/>
    </location>
</feature>